<organism>
    <name type="scientific">Escherichia coli (strain SE11)</name>
    <dbReference type="NCBI Taxonomy" id="409438"/>
    <lineage>
        <taxon>Bacteria</taxon>
        <taxon>Pseudomonadati</taxon>
        <taxon>Pseudomonadota</taxon>
        <taxon>Gammaproteobacteria</taxon>
        <taxon>Enterobacterales</taxon>
        <taxon>Enterobacteriaceae</taxon>
        <taxon>Escherichia</taxon>
    </lineage>
</organism>
<reference key="1">
    <citation type="journal article" date="2008" name="DNA Res.">
        <title>Complete genome sequence and comparative analysis of the wild-type commensal Escherichia coli strain SE11 isolated from a healthy adult.</title>
        <authorList>
            <person name="Oshima K."/>
            <person name="Toh H."/>
            <person name="Ogura Y."/>
            <person name="Sasamoto H."/>
            <person name="Morita H."/>
            <person name="Park S.-H."/>
            <person name="Ooka T."/>
            <person name="Iyoda S."/>
            <person name="Taylor T.D."/>
            <person name="Hayashi T."/>
            <person name="Itoh K."/>
            <person name="Hattori M."/>
        </authorList>
    </citation>
    <scope>NUCLEOTIDE SEQUENCE [LARGE SCALE GENOMIC DNA]</scope>
    <source>
        <strain>SE11</strain>
    </source>
</reference>
<dbReference type="EC" id="3.5.4.4" evidence="1"/>
<dbReference type="EMBL" id="AP009240">
    <property type="protein sequence ID" value="BAG77268.1"/>
    <property type="molecule type" value="Genomic_DNA"/>
</dbReference>
<dbReference type="RefSeq" id="WP_000567488.1">
    <property type="nucleotide sequence ID" value="NC_011415.1"/>
</dbReference>
<dbReference type="SMR" id="B6IB57"/>
<dbReference type="KEGG" id="ecy:ECSE_1744"/>
<dbReference type="HOGENOM" id="CLU_039228_0_2_6"/>
<dbReference type="Proteomes" id="UP000008199">
    <property type="component" value="Chromosome"/>
</dbReference>
<dbReference type="GO" id="GO:0005829">
    <property type="term" value="C:cytosol"/>
    <property type="evidence" value="ECO:0007669"/>
    <property type="project" value="TreeGrafter"/>
</dbReference>
<dbReference type="GO" id="GO:0046936">
    <property type="term" value="F:2'-deoxyadenosine deaminase activity"/>
    <property type="evidence" value="ECO:0007669"/>
    <property type="project" value="RHEA"/>
</dbReference>
<dbReference type="GO" id="GO:0004000">
    <property type="term" value="F:adenosine deaminase activity"/>
    <property type="evidence" value="ECO:0007669"/>
    <property type="project" value="UniProtKB-UniRule"/>
</dbReference>
<dbReference type="GO" id="GO:0008270">
    <property type="term" value="F:zinc ion binding"/>
    <property type="evidence" value="ECO:0007669"/>
    <property type="project" value="UniProtKB-UniRule"/>
</dbReference>
<dbReference type="GO" id="GO:0006154">
    <property type="term" value="P:adenosine catabolic process"/>
    <property type="evidence" value="ECO:0007669"/>
    <property type="project" value="TreeGrafter"/>
</dbReference>
<dbReference type="GO" id="GO:0043103">
    <property type="term" value="P:hypoxanthine salvage"/>
    <property type="evidence" value="ECO:0007669"/>
    <property type="project" value="TreeGrafter"/>
</dbReference>
<dbReference type="GO" id="GO:0046103">
    <property type="term" value="P:inosine biosynthetic process"/>
    <property type="evidence" value="ECO:0007669"/>
    <property type="project" value="TreeGrafter"/>
</dbReference>
<dbReference type="GO" id="GO:0009117">
    <property type="term" value="P:nucleotide metabolic process"/>
    <property type="evidence" value="ECO:0007669"/>
    <property type="project" value="UniProtKB-KW"/>
</dbReference>
<dbReference type="GO" id="GO:0009168">
    <property type="term" value="P:purine ribonucleoside monophosphate biosynthetic process"/>
    <property type="evidence" value="ECO:0007669"/>
    <property type="project" value="UniProtKB-UniRule"/>
</dbReference>
<dbReference type="CDD" id="cd01320">
    <property type="entry name" value="ADA"/>
    <property type="match status" value="1"/>
</dbReference>
<dbReference type="FunFam" id="3.20.20.140:FF:000009">
    <property type="entry name" value="Adenosine deaminase"/>
    <property type="match status" value="1"/>
</dbReference>
<dbReference type="Gene3D" id="3.20.20.140">
    <property type="entry name" value="Metal-dependent hydrolases"/>
    <property type="match status" value="1"/>
</dbReference>
<dbReference type="HAMAP" id="MF_00540">
    <property type="entry name" value="A_deaminase"/>
    <property type="match status" value="1"/>
</dbReference>
<dbReference type="InterPro" id="IPR006650">
    <property type="entry name" value="A/AMP_deam_AS"/>
</dbReference>
<dbReference type="InterPro" id="IPR028893">
    <property type="entry name" value="A_deaminase"/>
</dbReference>
<dbReference type="InterPro" id="IPR001365">
    <property type="entry name" value="A_deaminase_dom"/>
</dbReference>
<dbReference type="InterPro" id="IPR006330">
    <property type="entry name" value="Ado/ade_deaminase"/>
</dbReference>
<dbReference type="InterPro" id="IPR032466">
    <property type="entry name" value="Metal_Hydrolase"/>
</dbReference>
<dbReference type="NCBIfam" id="TIGR01430">
    <property type="entry name" value="aden_deam"/>
    <property type="match status" value="1"/>
</dbReference>
<dbReference type="NCBIfam" id="NF006846">
    <property type="entry name" value="PRK09358.1-1"/>
    <property type="match status" value="1"/>
</dbReference>
<dbReference type="PANTHER" id="PTHR11409">
    <property type="entry name" value="ADENOSINE DEAMINASE"/>
    <property type="match status" value="1"/>
</dbReference>
<dbReference type="PANTHER" id="PTHR11409:SF43">
    <property type="entry name" value="ADENOSINE DEAMINASE"/>
    <property type="match status" value="1"/>
</dbReference>
<dbReference type="Pfam" id="PF00962">
    <property type="entry name" value="A_deaminase"/>
    <property type="match status" value="1"/>
</dbReference>
<dbReference type="SUPFAM" id="SSF51556">
    <property type="entry name" value="Metallo-dependent hydrolases"/>
    <property type="match status" value="1"/>
</dbReference>
<dbReference type="PROSITE" id="PS00485">
    <property type="entry name" value="A_DEAMINASE"/>
    <property type="match status" value="1"/>
</dbReference>
<comment type="function">
    <text evidence="1">Catalyzes the hydrolytic deamination of adenosine and 2-deoxyadenosine.</text>
</comment>
<comment type="catalytic activity">
    <reaction evidence="1">
        <text>adenosine + H2O + H(+) = inosine + NH4(+)</text>
        <dbReference type="Rhea" id="RHEA:24408"/>
        <dbReference type="ChEBI" id="CHEBI:15377"/>
        <dbReference type="ChEBI" id="CHEBI:15378"/>
        <dbReference type="ChEBI" id="CHEBI:16335"/>
        <dbReference type="ChEBI" id="CHEBI:17596"/>
        <dbReference type="ChEBI" id="CHEBI:28938"/>
        <dbReference type="EC" id="3.5.4.4"/>
    </reaction>
    <physiologicalReaction direction="left-to-right" evidence="1">
        <dbReference type="Rhea" id="RHEA:24409"/>
    </physiologicalReaction>
</comment>
<comment type="catalytic activity">
    <reaction evidence="1">
        <text>2'-deoxyadenosine + H2O + H(+) = 2'-deoxyinosine + NH4(+)</text>
        <dbReference type="Rhea" id="RHEA:28190"/>
        <dbReference type="ChEBI" id="CHEBI:15377"/>
        <dbReference type="ChEBI" id="CHEBI:15378"/>
        <dbReference type="ChEBI" id="CHEBI:17256"/>
        <dbReference type="ChEBI" id="CHEBI:28938"/>
        <dbReference type="ChEBI" id="CHEBI:28997"/>
        <dbReference type="EC" id="3.5.4.4"/>
    </reaction>
    <physiologicalReaction direction="left-to-right" evidence="1">
        <dbReference type="Rhea" id="RHEA:28191"/>
    </physiologicalReaction>
</comment>
<comment type="cofactor">
    <cofactor evidence="1">
        <name>Zn(2+)</name>
        <dbReference type="ChEBI" id="CHEBI:29105"/>
    </cofactor>
    <text evidence="1">Binds 1 zinc ion per subunit.</text>
</comment>
<comment type="similarity">
    <text evidence="1">Belongs to the metallo-dependent hydrolases superfamily. Adenosine and AMP deaminases family. Adenosine deaminase subfamily.</text>
</comment>
<proteinExistence type="inferred from homology"/>
<protein>
    <recommendedName>
        <fullName evidence="1">Adenosine deaminase</fullName>
        <ecNumber evidence="1">3.5.4.4</ecNumber>
    </recommendedName>
    <alternativeName>
        <fullName evidence="1">Adenosine aminohydrolase</fullName>
    </alternativeName>
</protein>
<gene>
    <name evidence="1" type="primary">add</name>
    <name type="ordered locus">ECSE_1744</name>
</gene>
<accession>B6IB57</accession>
<keyword id="KW-0378">Hydrolase</keyword>
<keyword id="KW-0479">Metal-binding</keyword>
<keyword id="KW-0546">Nucleotide metabolism</keyword>
<keyword id="KW-0862">Zinc</keyword>
<feature type="chain" id="PRO_1000128845" description="Adenosine deaminase">
    <location>
        <begin position="1"/>
        <end position="333"/>
    </location>
</feature>
<feature type="active site" description="Proton donor" evidence="1">
    <location>
        <position position="200"/>
    </location>
</feature>
<feature type="binding site" evidence="1">
    <location>
        <position position="12"/>
    </location>
    <ligand>
        <name>Zn(2+)</name>
        <dbReference type="ChEBI" id="CHEBI:29105"/>
        <note>catalytic</note>
    </ligand>
</feature>
<feature type="binding site" evidence="1">
    <location>
        <position position="14"/>
    </location>
    <ligand>
        <name>substrate</name>
    </ligand>
</feature>
<feature type="binding site" evidence="1">
    <location>
        <position position="14"/>
    </location>
    <ligand>
        <name>Zn(2+)</name>
        <dbReference type="ChEBI" id="CHEBI:29105"/>
        <note>catalytic</note>
    </ligand>
</feature>
<feature type="binding site" evidence="1">
    <location>
        <position position="16"/>
    </location>
    <ligand>
        <name>substrate</name>
    </ligand>
</feature>
<feature type="binding site" evidence="1">
    <location>
        <position position="170"/>
    </location>
    <ligand>
        <name>substrate</name>
    </ligand>
</feature>
<feature type="binding site" evidence="1">
    <location>
        <position position="197"/>
    </location>
    <ligand>
        <name>Zn(2+)</name>
        <dbReference type="ChEBI" id="CHEBI:29105"/>
        <note>catalytic</note>
    </ligand>
</feature>
<feature type="binding site" evidence="1">
    <location>
        <position position="278"/>
    </location>
    <ligand>
        <name>Zn(2+)</name>
        <dbReference type="ChEBI" id="CHEBI:29105"/>
        <note>catalytic</note>
    </ligand>
</feature>
<feature type="binding site" evidence="1">
    <location>
        <position position="279"/>
    </location>
    <ligand>
        <name>substrate</name>
    </ligand>
</feature>
<feature type="site" description="Important for catalytic activity" evidence="1">
    <location>
        <position position="221"/>
    </location>
</feature>
<sequence>MIDTTLPLTDIHRHLDGNIRPQTILELGRQYNISLPAQSLETLIPHVQVIANEPDLVSFLTKLDWGVKVLASLDACRRVAFENIEDAARHGLHYVELRFSPGYMAMAHQLPVAGVVEAVIDGVREGCRTFGVQAKLIGIMSRTFGEAACQQELEAFLAHRDQITALDLAGDELGFPGSLFLSHFNRARDAGWHITVHAGEAAGPESIWQAIRELGAERIGHGVKAIEDRALMDFLAEQQIGIESCLTSNIQTSSVAELAAHPLKTFLEHGIRASINTDDPGVQGVDIIHEYTVAAPAAGLSREQIRQAQINGLEMAFLSAEEKRALREKVAAK</sequence>
<name>ADD_ECOSE</name>
<evidence type="ECO:0000255" key="1">
    <source>
        <dbReference type="HAMAP-Rule" id="MF_00540"/>
    </source>
</evidence>